<reference key="1">
    <citation type="submission" date="2003-03" db="EMBL/GenBank/DDBJ databases">
        <title>African swine fever virus genomes.</title>
        <authorList>
            <person name="Kutish G.F."/>
            <person name="Rock D.L."/>
        </authorList>
    </citation>
    <scope>NUCLEOTIDE SEQUENCE [LARGE SCALE GENOMIC DNA]</scope>
</reference>
<gene>
    <name type="ordered locus">Pret-057</name>
</gene>
<sequence>METFFIETLASDVYGKALNVDLDRLSQAQIKYTLQELISYCSALTILHYDYSTLAARLSVYQLHQSTASSFSKAVRLQAAQSCSRLSPQFVDVVYKYKAIFDSYIDYSRDYKLSLLGIETMKNSYLLKNKDGVIMERPQDAYMRVAIMIYGMGKVVNIKMILLTYDLLSRHIITHASPTMFNAGTKKPQLSSCFLLNVNDNLENLYDMVKTAGIISGGGGGIGLCLSGIRAKNSFISGSGLRSNGIQNYIMLQNASQCYANQGGLRPGAYAVYLELWHQDIFTFLEMPRLKGQMAEQRLNAPNLKYGLWVPDLFMEILEDQIHNRGDGRWYLFSPDQAPNLHKVFDLERSQHENAHREFKKLYYQYVAEKRYTGVTTAKEIIKAWFKTVIQVGNPYIGFKDAINRKSNLSHVGTITNSNLCIEVTIPCWEGDKAEQGVCNLAAVNLAAFIRENGYDYRGLIEASGNVTENLDNIIDNGYYPTEATRRSNMRHRPIGIGVFGLADVFASLKIKFGSPEAIAMDEAIHAALYYGAMRRSIELAKEKGSHPSFPGSAASKGLLQPDLWVRCGDLIPSWEERVAQTTQGVLTRKSWRQLRLAAIQGVRNGYLTALMPTATSSNSTGKNECFEPFTSNLYTRRTLSGEFIVLNKYLIDDLKEINLWTEAIQLQLLNAGGSIQHILDIPAEIRDRYKTSREMNQKILTKHAAARNPFVSQSMSLNYYFYEPELSQVLTVLVLGWKKGLTTGSYYCHFSPGAGTQKKIIRNSEKACNADCEACLL</sequence>
<keyword id="KW-0021">Allosteric enzyme</keyword>
<keyword id="KW-0067">ATP-binding</keyword>
<keyword id="KW-0215">Deoxyribonucleotide synthesis</keyword>
<keyword id="KW-1015">Disulfide bond</keyword>
<keyword id="KW-0244">Early protein</keyword>
<keyword id="KW-0547">Nucleotide-binding</keyword>
<keyword id="KW-0560">Oxidoreductase</keyword>
<comment type="function">
    <text evidence="1">Ribonucleoside-diphosphate reductase holoenzyme provides the precursors necessary for viral DNA synthesis. Allows virus growth in non-dividing cells. Catalyzes the biosynthesis of deoxyribonucleotides from the corresponding ribonucleotides (By similarity).</text>
</comment>
<comment type="catalytic activity">
    <reaction>
        <text>a 2'-deoxyribonucleoside 5'-diphosphate + [thioredoxin]-disulfide + H2O = a ribonucleoside 5'-diphosphate + [thioredoxin]-dithiol</text>
        <dbReference type="Rhea" id="RHEA:23252"/>
        <dbReference type="Rhea" id="RHEA-COMP:10698"/>
        <dbReference type="Rhea" id="RHEA-COMP:10700"/>
        <dbReference type="ChEBI" id="CHEBI:15377"/>
        <dbReference type="ChEBI" id="CHEBI:29950"/>
        <dbReference type="ChEBI" id="CHEBI:50058"/>
        <dbReference type="ChEBI" id="CHEBI:57930"/>
        <dbReference type="ChEBI" id="CHEBI:73316"/>
        <dbReference type="EC" id="1.17.4.1"/>
    </reaction>
</comment>
<comment type="activity regulation">
    <text evidence="1">Under complex allosteric control mediated by deoxynucleoside triphosphates and ATP binding. The type of nucleotide bound at the specificity site determines substrate preference. It seems probable that ATP makes the enzyme reduce CDP and UDP, dGTP favors ADP reduction and dTTP favors GDP reduction (By similarity).</text>
</comment>
<comment type="subunit">
    <text evidence="1">Heterotetramer composed of a homodimer of the large subunit (R1) and a homodimer of the small subunit (R2). Larger multisubunit protein complex are also active, composed of (R1)n(R2)n (By similarity).</text>
</comment>
<comment type="induction">
    <text evidence="2">Expressed in the early phase of the viral replicative cycle.</text>
</comment>
<comment type="similarity">
    <text evidence="2">Belongs to the ribonucleoside diphosphate reductase large chain family.</text>
</comment>
<name>RIR1_ASFP4</name>
<accession>P0C8H8</accession>
<organism>
    <name type="scientific">African swine fever virus (isolate Tick/South Africa/Pretoriuskop Pr4/1996)</name>
    <name type="common">ASFV</name>
    <dbReference type="NCBI Taxonomy" id="561443"/>
    <lineage>
        <taxon>Viruses</taxon>
        <taxon>Varidnaviria</taxon>
        <taxon>Bamfordvirae</taxon>
        <taxon>Nucleocytoviricota</taxon>
        <taxon>Pokkesviricetes</taxon>
        <taxon>Asfuvirales</taxon>
        <taxon>Asfarviridae</taxon>
        <taxon>Asfivirus</taxon>
        <taxon>African swine fever virus</taxon>
    </lineage>
</organism>
<proteinExistence type="inferred from homology"/>
<dbReference type="EC" id="1.17.4.1"/>
<dbReference type="EMBL" id="AY261363">
    <property type="status" value="NOT_ANNOTATED_CDS"/>
    <property type="molecule type" value="Genomic_DNA"/>
</dbReference>
<dbReference type="SMR" id="P0C8H8"/>
<dbReference type="Proteomes" id="UP000000859">
    <property type="component" value="Segment"/>
</dbReference>
<dbReference type="GO" id="GO:0005524">
    <property type="term" value="F:ATP binding"/>
    <property type="evidence" value="ECO:0007669"/>
    <property type="project" value="UniProtKB-KW"/>
</dbReference>
<dbReference type="GO" id="GO:0004748">
    <property type="term" value="F:ribonucleoside-diphosphate reductase activity, thioredoxin disulfide as acceptor"/>
    <property type="evidence" value="ECO:0007669"/>
    <property type="project" value="UniProtKB-EC"/>
</dbReference>
<dbReference type="GO" id="GO:0009263">
    <property type="term" value="P:deoxyribonucleotide biosynthetic process"/>
    <property type="evidence" value="ECO:0007669"/>
    <property type="project" value="UniProtKB-KW"/>
</dbReference>
<dbReference type="Gene3D" id="3.20.70.20">
    <property type="match status" value="1"/>
</dbReference>
<dbReference type="InterPro" id="IPR013346">
    <property type="entry name" value="NrdE_NrdA_C"/>
</dbReference>
<dbReference type="InterPro" id="IPR000788">
    <property type="entry name" value="RNR_lg_C"/>
</dbReference>
<dbReference type="InterPro" id="IPR013509">
    <property type="entry name" value="RNR_lsu_N"/>
</dbReference>
<dbReference type="InterPro" id="IPR008926">
    <property type="entry name" value="RNR_R1-su_N"/>
</dbReference>
<dbReference type="InterPro" id="IPR039718">
    <property type="entry name" value="Rrm1"/>
</dbReference>
<dbReference type="NCBIfam" id="TIGR02506">
    <property type="entry name" value="NrdE_NrdA"/>
    <property type="match status" value="1"/>
</dbReference>
<dbReference type="PANTHER" id="PTHR11573">
    <property type="entry name" value="RIBONUCLEOSIDE-DIPHOSPHATE REDUCTASE LARGE CHAIN"/>
    <property type="match status" value="1"/>
</dbReference>
<dbReference type="PANTHER" id="PTHR11573:SF6">
    <property type="entry name" value="RIBONUCLEOSIDE-DIPHOSPHATE REDUCTASE LARGE SUBUNIT"/>
    <property type="match status" value="1"/>
</dbReference>
<dbReference type="Pfam" id="PF02867">
    <property type="entry name" value="Ribonuc_red_lgC"/>
    <property type="match status" value="1"/>
</dbReference>
<dbReference type="Pfam" id="PF00317">
    <property type="entry name" value="Ribonuc_red_lgN"/>
    <property type="match status" value="1"/>
</dbReference>
<dbReference type="PRINTS" id="PR01183">
    <property type="entry name" value="RIBORDTASEM1"/>
</dbReference>
<dbReference type="SUPFAM" id="SSF51998">
    <property type="entry name" value="PFL-like glycyl radical enzymes"/>
    <property type="match status" value="1"/>
</dbReference>
<dbReference type="SUPFAM" id="SSF48168">
    <property type="entry name" value="R1 subunit of ribonucleotide reductase, N-terminal domain"/>
    <property type="match status" value="1"/>
</dbReference>
<dbReference type="PROSITE" id="PS00089">
    <property type="entry name" value="RIBORED_LARGE"/>
    <property type="match status" value="1"/>
</dbReference>
<protein>
    <recommendedName>
        <fullName>Ribonucleoside-diphosphate reductase large subunit</fullName>
        <ecNumber>1.17.4.1</ecNumber>
    </recommendedName>
    <alternativeName>
        <fullName>Ribonucleotide reductase large subunit</fullName>
    </alternativeName>
</protein>
<evidence type="ECO:0000250" key="1"/>
<evidence type="ECO:0000305" key="2"/>
<feature type="chain" id="PRO_0000355220" description="Ribonucleoside-diphosphate reductase large subunit">
    <location>
        <begin position="1"/>
        <end position="778"/>
    </location>
</feature>
<feature type="active site" description="Proton acceptor" evidence="1">
    <location>
        <position position="419"/>
    </location>
</feature>
<feature type="active site" description="Cysteine radical intermediate" evidence="1">
    <location>
        <position position="421"/>
    </location>
</feature>
<feature type="active site" description="Proton acceptor" evidence="1">
    <location>
        <position position="423"/>
    </location>
</feature>
<feature type="binding site" evidence="1">
    <location>
        <position position="177"/>
    </location>
    <ligand>
        <name>substrate</name>
    </ligand>
</feature>
<feature type="binding site" evidence="1">
    <location>
        <begin position="192"/>
        <end position="193"/>
    </location>
    <ligand>
        <name>substrate</name>
    </ligand>
</feature>
<feature type="binding site" evidence="1">
    <location>
        <position position="221"/>
    </location>
    <ligand>
        <name>substrate</name>
    </ligand>
</feature>
<feature type="binding site" evidence="1">
    <location>
        <begin position="419"/>
        <end position="423"/>
    </location>
    <ligand>
        <name>substrate</name>
    </ligand>
</feature>
<feature type="binding site" evidence="1">
    <location>
        <begin position="613"/>
        <end position="617"/>
    </location>
    <ligand>
        <name>substrate</name>
    </ligand>
</feature>
<feature type="site" description="Important for hydrogen atom transfer" evidence="1">
    <location>
        <position position="193"/>
    </location>
</feature>
<feature type="site" description="Allosteric effector binding" evidence="1">
    <location>
        <position position="200"/>
    </location>
</feature>
<feature type="site" description="Allosteric effector binding" evidence="1">
    <location>
        <position position="230"/>
    </location>
</feature>
<feature type="site" description="Important for hydrogen atom transfer" evidence="1">
    <location>
        <position position="439"/>
    </location>
</feature>
<feature type="site" description="Important for electron transfer" evidence="1">
    <location>
        <position position="747"/>
    </location>
</feature>
<feature type="site" description="Important for electron transfer" evidence="1">
    <location>
        <position position="748"/>
    </location>
</feature>
<feature type="site" description="Interacts with thioredoxin/glutaredoxin" evidence="1">
    <location>
        <position position="773"/>
    </location>
</feature>
<feature type="site" description="Interacts with thioredoxin/glutaredoxin" evidence="1">
    <location>
        <position position="776"/>
    </location>
</feature>
<feature type="disulfide bond" description="Redox-active" evidence="1">
    <location>
        <begin position="193"/>
        <end position="439"/>
    </location>
</feature>
<organismHost>
    <name type="scientific">Ornithodoros</name>
    <name type="common">relapsing fever ticks</name>
    <dbReference type="NCBI Taxonomy" id="6937"/>
</organismHost>
<organismHost>
    <name type="scientific">Phacochoerus aethiopicus</name>
    <name type="common">Warthog</name>
    <dbReference type="NCBI Taxonomy" id="85517"/>
</organismHost>
<organismHost>
    <name type="scientific">Phacochoerus africanus</name>
    <name type="common">Warthog</name>
    <dbReference type="NCBI Taxonomy" id="41426"/>
</organismHost>
<organismHost>
    <name type="scientific">Potamochoerus larvatus</name>
    <name type="common">Bushpig</name>
    <dbReference type="NCBI Taxonomy" id="273792"/>
</organismHost>
<organismHost>
    <name type="scientific">Sus scrofa</name>
    <name type="common">Pig</name>
    <dbReference type="NCBI Taxonomy" id="9823"/>
</organismHost>